<name>MAK5_GIBZE</name>
<reference key="1">
    <citation type="journal article" date="2007" name="Science">
        <title>The Fusarium graminearum genome reveals a link between localized polymorphism and pathogen specialization.</title>
        <authorList>
            <person name="Cuomo C.A."/>
            <person name="Gueldener U."/>
            <person name="Xu J.-R."/>
            <person name="Trail F."/>
            <person name="Turgeon B.G."/>
            <person name="Di Pietro A."/>
            <person name="Walton J.D."/>
            <person name="Ma L.-J."/>
            <person name="Baker S.E."/>
            <person name="Rep M."/>
            <person name="Adam G."/>
            <person name="Antoniw J."/>
            <person name="Baldwin T."/>
            <person name="Calvo S.E."/>
            <person name="Chang Y.-L."/>
            <person name="DeCaprio D."/>
            <person name="Gale L.R."/>
            <person name="Gnerre S."/>
            <person name="Goswami R.S."/>
            <person name="Hammond-Kosack K."/>
            <person name="Harris L.J."/>
            <person name="Hilburn K."/>
            <person name="Kennell J.C."/>
            <person name="Kroken S."/>
            <person name="Magnuson J.K."/>
            <person name="Mannhaupt G."/>
            <person name="Mauceli E.W."/>
            <person name="Mewes H.-W."/>
            <person name="Mitterbauer R."/>
            <person name="Muehlbauer G."/>
            <person name="Muensterkoetter M."/>
            <person name="Nelson D."/>
            <person name="O'Donnell K."/>
            <person name="Ouellet T."/>
            <person name="Qi W."/>
            <person name="Quesneville H."/>
            <person name="Roncero M.I.G."/>
            <person name="Seong K.-Y."/>
            <person name="Tetko I.V."/>
            <person name="Urban M."/>
            <person name="Waalwijk C."/>
            <person name="Ward T.J."/>
            <person name="Yao J."/>
            <person name="Birren B.W."/>
            <person name="Kistler H.C."/>
        </authorList>
    </citation>
    <scope>NUCLEOTIDE SEQUENCE [LARGE SCALE GENOMIC DNA]</scope>
    <source>
        <strain>ATCC MYA-4620 / CBS 123657 / FGSC 9075 / NRRL 31084 / PH-1</strain>
    </source>
</reference>
<reference key="2">
    <citation type="journal article" date="2010" name="Nature">
        <title>Comparative genomics reveals mobile pathogenicity chromosomes in Fusarium.</title>
        <authorList>
            <person name="Ma L.-J."/>
            <person name="van der Does H.C."/>
            <person name="Borkovich K.A."/>
            <person name="Coleman J.J."/>
            <person name="Daboussi M.-J."/>
            <person name="Di Pietro A."/>
            <person name="Dufresne M."/>
            <person name="Freitag M."/>
            <person name="Grabherr M."/>
            <person name="Henrissat B."/>
            <person name="Houterman P.M."/>
            <person name="Kang S."/>
            <person name="Shim W.-B."/>
            <person name="Woloshuk C."/>
            <person name="Xie X."/>
            <person name="Xu J.-R."/>
            <person name="Antoniw J."/>
            <person name="Baker S.E."/>
            <person name="Bluhm B.H."/>
            <person name="Breakspear A."/>
            <person name="Brown D.W."/>
            <person name="Butchko R.A.E."/>
            <person name="Chapman S."/>
            <person name="Coulson R."/>
            <person name="Coutinho P.M."/>
            <person name="Danchin E.G.J."/>
            <person name="Diener A."/>
            <person name="Gale L.R."/>
            <person name="Gardiner D.M."/>
            <person name="Goff S."/>
            <person name="Hammond-Kosack K.E."/>
            <person name="Hilburn K."/>
            <person name="Hua-Van A."/>
            <person name="Jonkers W."/>
            <person name="Kazan K."/>
            <person name="Kodira C.D."/>
            <person name="Koehrsen M."/>
            <person name="Kumar L."/>
            <person name="Lee Y.-H."/>
            <person name="Li L."/>
            <person name="Manners J.M."/>
            <person name="Miranda-Saavedra D."/>
            <person name="Mukherjee M."/>
            <person name="Park G."/>
            <person name="Park J."/>
            <person name="Park S.-Y."/>
            <person name="Proctor R.H."/>
            <person name="Regev A."/>
            <person name="Ruiz-Roldan M.C."/>
            <person name="Sain D."/>
            <person name="Sakthikumar S."/>
            <person name="Sykes S."/>
            <person name="Schwartz D.C."/>
            <person name="Turgeon B.G."/>
            <person name="Wapinski I."/>
            <person name="Yoder O."/>
            <person name="Young S."/>
            <person name="Zeng Q."/>
            <person name="Zhou S."/>
            <person name="Galagan J."/>
            <person name="Cuomo C.A."/>
            <person name="Kistler H.C."/>
            <person name="Rep M."/>
        </authorList>
    </citation>
    <scope>GENOME REANNOTATION</scope>
    <source>
        <strain>ATCC MYA-4620 / CBS 123657 / FGSC 9075 / NRRL 31084 / PH-1</strain>
    </source>
</reference>
<reference key="3">
    <citation type="journal article" date="2015" name="BMC Genomics">
        <title>The completed genome sequence of the pathogenic ascomycete fungus Fusarium graminearum.</title>
        <authorList>
            <person name="King R."/>
            <person name="Urban M."/>
            <person name="Hammond-Kosack M.C.U."/>
            <person name="Hassani-Pak K."/>
            <person name="Hammond-Kosack K.E."/>
        </authorList>
    </citation>
    <scope>NUCLEOTIDE SEQUENCE [LARGE SCALE GENOMIC DNA]</scope>
    <source>
        <strain>ATCC MYA-4620 / CBS 123657 / FGSC 9075 / NRRL 31084 / PH-1</strain>
    </source>
</reference>
<dbReference type="EC" id="3.6.4.13"/>
<dbReference type="EMBL" id="DS231665">
    <property type="protein sequence ID" value="ESU11278.1"/>
    <property type="molecule type" value="Genomic_DNA"/>
</dbReference>
<dbReference type="EMBL" id="HG970334">
    <property type="protein sequence ID" value="CEF87051.1"/>
    <property type="molecule type" value="Genomic_DNA"/>
</dbReference>
<dbReference type="RefSeq" id="XP_011323854.1">
    <property type="nucleotide sequence ID" value="XM_011325552.1"/>
</dbReference>
<dbReference type="SMR" id="Q4IBS2"/>
<dbReference type="FunCoup" id="Q4IBS2">
    <property type="interactions" value="947"/>
</dbReference>
<dbReference type="STRING" id="229533.Q4IBS2"/>
<dbReference type="GeneID" id="23552522"/>
<dbReference type="KEGG" id="fgr:FGSG_05336"/>
<dbReference type="VEuPathDB" id="FungiDB:FGRAMPH1_01G17655"/>
<dbReference type="eggNOG" id="KOG0347">
    <property type="taxonomic scope" value="Eukaryota"/>
</dbReference>
<dbReference type="HOGENOM" id="CLU_003041_13_0_1"/>
<dbReference type="InParanoid" id="Q4IBS2"/>
<dbReference type="OrthoDB" id="111661at110618"/>
<dbReference type="Proteomes" id="UP000070720">
    <property type="component" value="Chromosome 3"/>
</dbReference>
<dbReference type="GO" id="GO:0005730">
    <property type="term" value="C:nucleolus"/>
    <property type="evidence" value="ECO:0007669"/>
    <property type="project" value="UniProtKB-SubCell"/>
</dbReference>
<dbReference type="GO" id="GO:0005524">
    <property type="term" value="F:ATP binding"/>
    <property type="evidence" value="ECO:0007669"/>
    <property type="project" value="UniProtKB-KW"/>
</dbReference>
<dbReference type="GO" id="GO:0016887">
    <property type="term" value="F:ATP hydrolysis activity"/>
    <property type="evidence" value="ECO:0007669"/>
    <property type="project" value="RHEA"/>
</dbReference>
<dbReference type="GO" id="GO:0003723">
    <property type="term" value="F:RNA binding"/>
    <property type="evidence" value="ECO:0007669"/>
    <property type="project" value="UniProtKB-KW"/>
</dbReference>
<dbReference type="GO" id="GO:0003724">
    <property type="term" value="F:RNA helicase activity"/>
    <property type="evidence" value="ECO:0007669"/>
    <property type="project" value="UniProtKB-EC"/>
</dbReference>
<dbReference type="GO" id="GO:0006364">
    <property type="term" value="P:rRNA processing"/>
    <property type="evidence" value="ECO:0007669"/>
    <property type="project" value="UniProtKB-KW"/>
</dbReference>
<dbReference type="CDD" id="cd18787">
    <property type="entry name" value="SF2_C_DEAD"/>
    <property type="match status" value="1"/>
</dbReference>
<dbReference type="Gene3D" id="3.40.50.300">
    <property type="entry name" value="P-loop containing nucleotide triphosphate hydrolases"/>
    <property type="match status" value="2"/>
</dbReference>
<dbReference type="InterPro" id="IPR011545">
    <property type="entry name" value="DEAD/DEAH_box_helicase_dom"/>
</dbReference>
<dbReference type="InterPro" id="IPR014001">
    <property type="entry name" value="Helicase_ATP-bd"/>
</dbReference>
<dbReference type="InterPro" id="IPR001650">
    <property type="entry name" value="Helicase_C-like"/>
</dbReference>
<dbReference type="InterPro" id="IPR027417">
    <property type="entry name" value="P-loop_NTPase"/>
</dbReference>
<dbReference type="InterPro" id="IPR000629">
    <property type="entry name" value="RNA-helicase_DEAD-box_CS"/>
</dbReference>
<dbReference type="InterPro" id="IPR014014">
    <property type="entry name" value="RNA_helicase_DEAD_Q_motif"/>
</dbReference>
<dbReference type="PANTHER" id="PTHR24031">
    <property type="entry name" value="RNA HELICASE"/>
    <property type="match status" value="1"/>
</dbReference>
<dbReference type="Pfam" id="PF00270">
    <property type="entry name" value="DEAD"/>
    <property type="match status" value="1"/>
</dbReference>
<dbReference type="Pfam" id="PF00271">
    <property type="entry name" value="Helicase_C"/>
    <property type="match status" value="1"/>
</dbReference>
<dbReference type="SMART" id="SM00487">
    <property type="entry name" value="DEXDc"/>
    <property type="match status" value="1"/>
</dbReference>
<dbReference type="SMART" id="SM00490">
    <property type="entry name" value="HELICc"/>
    <property type="match status" value="1"/>
</dbReference>
<dbReference type="SUPFAM" id="SSF52540">
    <property type="entry name" value="P-loop containing nucleoside triphosphate hydrolases"/>
    <property type="match status" value="1"/>
</dbReference>
<dbReference type="PROSITE" id="PS00039">
    <property type="entry name" value="DEAD_ATP_HELICASE"/>
    <property type="match status" value="1"/>
</dbReference>
<dbReference type="PROSITE" id="PS51192">
    <property type="entry name" value="HELICASE_ATP_BIND_1"/>
    <property type="match status" value="1"/>
</dbReference>
<dbReference type="PROSITE" id="PS51194">
    <property type="entry name" value="HELICASE_CTER"/>
    <property type="match status" value="1"/>
</dbReference>
<dbReference type="PROSITE" id="PS51195">
    <property type="entry name" value="Q_MOTIF"/>
    <property type="match status" value="1"/>
</dbReference>
<sequence length="781" mass="84922">MVPPSKKRKLPAATGPATKRSKNIPKPSSSKKKSGKESRSTVEAGALSWASVGEDFGGLEVIEGVDVVKDGNRVQFLVSGDKNKSNIIDPQQEVVDGDRPFEGFGDDAVEVGDIDSGEVGSDQAGAESKKPQGKNKGKNEPKEGQEKADQETNKKQKQKQNKNKLDGKNGAGNKQDEQLVKAAQGVQKSSTRGGNTFGALADGNDYKDQEDVDMAAWVSLNLSPQIISAIAKLKFMKPTKIQKRTIPEIVAGHDVIGKAQTGSGKTLAFGIPMVERWLEMQEQGVKRTGPMSLVLSPTRELAKQLGDHLKALCDGLPSAPYVCVVTGGLSILKQQRQLEKADIVIGTPGRLWEVLSGDRALQSKFAKIRFLVVDEADRLFKVGQFKEAEDIIGALDGKSPGDDAESEEESDEEDEDDEDAARQTLVFSATFDKDLQTKLAGKGKSSGNDDEKMAYLMKCLKFRGEPKFIDVNPVSQMAEGLREGLIECGAMEKDLYLYTVLILNPGRRTLVFTNSISAVRRLTPLLTNLNLTALPLHSQMAQKARHRSLERFTASRNSILIATDVAARGLDIKEVDQVLHYHVPRSADTYIHRSGRTARGESSGISVILCAPEEVLPTRRLASKVHAVRSAGVKREHFIQTLLIDRKAASRLKPRVDLAKKIADTILAKEKAHSDDTWLRNAADELGVEYDSDDLEEINAGGGKGGRGGGRKRKEQTAKQLTKAEMGALKAQLREELSRRVNLGVSERYITGGRVDVGALLREGQQGGMFLGNTDGLGFDL</sequence>
<protein>
    <recommendedName>
        <fullName>ATP-dependent RNA helicase MAK5</fullName>
        <ecNumber>3.6.4.13</ecNumber>
    </recommendedName>
</protein>
<keyword id="KW-0067">ATP-binding</keyword>
<keyword id="KW-0347">Helicase</keyword>
<keyword id="KW-0378">Hydrolase</keyword>
<keyword id="KW-0547">Nucleotide-binding</keyword>
<keyword id="KW-0539">Nucleus</keyword>
<keyword id="KW-1185">Reference proteome</keyword>
<keyword id="KW-0690">Ribosome biogenesis</keyword>
<keyword id="KW-0694">RNA-binding</keyword>
<keyword id="KW-0698">rRNA processing</keyword>
<gene>
    <name type="primary">MAK5</name>
    <name type="ORF">FGRRES_05336</name>
    <name type="ORF">FGSG_05336</name>
</gene>
<comment type="function">
    <text evidence="1">ATP-binding RNA helicase involved in the biogenesis of 60S ribosomal subunits and is required for the normal formation of 25S and 5.8S rRNAs.</text>
</comment>
<comment type="catalytic activity">
    <reaction>
        <text>ATP + H2O = ADP + phosphate + H(+)</text>
        <dbReference type="Rhea" id="RHEA:13065"/>
        <dbReference type="ChEBI" id="CHEBI:15377"/>
        <dbReference type="ChEBI" id="CHEBI:15378"/>
        <dbReference type="ChEBI" id="CHEBI:30616"/>
        <dbReference type="ChEBI" id="CHEBI:43474"/>
        <dbReference type="ChEBI" id="CHEBI:456216"/>
        <dbReference type="EC" id="3.6.4.13"/>
    </reaction>
</comment>
<comment type="subcellular location">
    <subcellularLocation>
        <location evidence="1">Nucleus</location>
        <location evidence="1">Nucleolus</location>
    </subcellularLocation>
</comment>
<comment type="domain">
    <text>The Q motif is unique to and characteristic of the DEAD box family of RNA helicases and controls ATP binding and hydrolysis.</text>
</comment>
<comment type="similarity">
    <text evidence="5">Belongs to the DEAD box helicase family. DDX24/MAK5 subfamily.</text>
</comment>
<feature type="chain" id="PRO_0000232236" description="ATP-dependent RNA helicase MAK5">
    <location>
        <begin position="1"/>
        <end position="781"/>
    </location>
</feature>
<feature type="domain" description="Helicase ATP-binding" evidence="2">
    <location>
        <begin position="246"/>
        <end position="449"/>
    </location>
</feature>
<feature type="domain" description="Helicase C-terminal" evidence="3">
    <location>
        <begin position="494"/>
        <end position="643"/>
    </location>
</feature>
<feature type="region of interest" description="Disordered" evidence="4">
    <location>
        <begin position="1"/>
        <end position="47"/>
    </location>
</feature>
<feature type="region of interest" description="Disordered" evidence="4">
    <location>
        <begin position="79"/>
        <end position="196"/>
    </location>
</feature>
<feature type="region of interest" description="Disordered" evidence="4">
    <location>
        <begin position="394"/>
        <end position="419"/>
    </location>
</feature>
<feature type="region of interest" description="Disordered" evidence="4">
    <location>
        <begin position="697"/>
        <end position="721"/>
    </location>
</feature>
<feature type="short sequence motif" description="Q motif">
    <location>
        <begin position="215"/>
        <end position="243"/>
    </location>
</feature>
<feature type="short sequence motif" description="DEAD box">
    <location>
        <begin position="374"/>
        <end position="377"/>
    </location>
</feature>
<feature type="compositionally biased region" description="Basic residues" evidence="4">
    <location>
        <begin position="1"/>
        <end position="10"/>
    </location>
</feature>
<feature type="compositionally biased region" description="Basic residues" evidence="4">
    <location>
        <begin position="19"/>
        <end position="34"/>
    </location>
</feature>
<feature type="compositionally biased region" description="Acidic residues" evidence="4">
    <location>
        <begin position="104"/>
        <end position="116"/>
    </location>
</feature>
<feature type="compositionally biased region" description="Basic and acidic residues" evidence="4">
    <location>
        <begin position="137"/>
        <end position="154"/>
    </location>
</feature>
<feature type="compositionally biased region" description="Acidic residues" evidence="4">
    <location>
        <begin position="402"/>
        <end position="419"/>
    </location>
</feature>
<feature type="binding site" evidence="2">
    <location>
        <begin position="259"/>
        <end position="266"/>
    </location>
    <ligand>
        <name>ATP</name>
        <dbReference type="ChEBI" id="CHEBI:30616"/>
    </ligand>
</feature>
<proteinExistence type="inferred from homology"/>
<accession>Q4IBS2</accession>
<accession>A0A098DYW5</accession>
<accession>A0A0E0SKT8</accession>
<accession>I1RMY2</accession>
<accession>V6R9H8</accession>
<evidence type="ECO:0000250" key="1"/>
<evidence type="ECO:0000255" key="2">
    <source>
        <dbReference type="PROSITE-ProRule" id="PRU00541"/>
    </source>
</evidence>
<evidence type="ECO:0000255" key="3">
    <source>
        <dbReference type="PROSITE-ProRule" id="PRU00542"/>
    </source>
</evidence>
<evidence type="ECO:0000256" key="4">
    <source>
        <dbReference type="SAM" id="MobiDB-lite"/>
    </source>
</evidence>
<evidence type="ECO:0000305" key="5"/>
<organism>
    <name type="scientific">Gibberella zeae (strain ATCC MYA-4620 / CBS 123657 / FGSC 9075 / NRRL 31084 / PH-1)</name>
    <name type="common">Wheat head blight fungus</name>
    <name type="synonym">Fusarium graminearum</name>
    <dbReference type="NCBI Taxonomy" id="229533"/>
    <lineage>
        <taxon>Eukaryota</taxon>
        <taxon>Fungi</taxon>
        <taxon>Dikarya</taxon>
        <taxon>Ascomycota</taxon>
        <taxon>Pezizomycotina</taxon>
        <taxon>Sordariomycetes</taxon>
        <taxon>Hypocreomycetidae</taxon>
        <taxon>Hypocreales</taxon>
        <taxon>Nectriaceae</taxon>
        <taxon>Fusarium</taxon>
    </lineage>
</organism>